<name>PRLS_FUNXX</name>
<keyword id="KW-0436">Ligase</keyword>
<keyword id="KW-0489">Methyltransferase</keyword>
<keyword id="KW-0511">Multifunctional enzyme</keyword>
<keyword id="KW-0560">Oxidoreductase</keyword>
<keyword id="KW-0596">Phosphopantetheine</keyword>
<keyword id="KW-0597">Phosphoprotein</keyword>
<keyword id="KW-0677">Repeat</keyword>
<keyword id="KW-0808">Transferase</keyword>
<organism>
    <name type="scientific">Fungal sp. (strain NRRL 50135)</name>
    <dbReference type="NCBI Taxonomy" id="1547289"/>
    <lineage>
        <taxon>Eukaryota</taxon>
        <taxon>Fungi</taxon>
    </lineage>
</organism>
<comment type="function">
    <text evidence="1 8 9">Hybrid PKS-NRPS synthetase; part of the gene cluster that mediates the biosynthesis of pyrrolocin, a bright yellow trans-fused decalin-containing tetramic acid with antimicrobial activity (PubMed:25226362, PubMed:25351193). The PKS module of prlS together with the enoylreductase prlC catalyze the formation of the polyketide unit which is then conjugated to L-serine by the condensation domain of the prlS NRPS module (PubMed:25226362). Diels-Alderase gNR600 is involved in endo-selective Diels-Alder cycloaddition to form the decalin ring (By similarity). Subsequent methylation is carried leads to pyrrolocin A (PubMed:25226362). The methyltransferase involved in that last step has not been identified yet and is probably located outside of the prl cluster (PubMed:25226362).</text>
</comment>
<comment type="pathway">
    <text evidence="8">Mycotoxin biosynthesis.</text>
</comment>
<comment type="domain">
    <text evidence="2 3">NRP synthetases are composed of discrete domains (adenylation (A), thiolation (T) or peptidyl carrier protein (PCP) and condensation (C) domains) which when grouped together are referred to as a single module. Each module is responsible for the recognition (via the A domain) and incorporation of a single amino acid into the growing peptide product (By similarity). Thus, an NRP synthetase is generally composed of one or more modules and can terminate in a thioesterase domain (TE) that releases the newly synthesized peptide from the enzyme (By similarity). Occasionally, epimerase (E) domains (responsible for l- to d-amino acid conversion) are present within the NRP synthetase (By similarity). PrlS also contains a polyketide synthase module (PKS) consisting of several catalytic domains including a ketoacyl synthase domain (KS), an acyl transferase domain (AT), a dehydratase domain (DH), a methyltransferase domain (MT), and a ketoreductase domain (KR) (By similarity). Instead of a thioesterase domain (TE), prlS finishes with a reductase-like domain (R) for peptide release (By similarity). PrlS has the following architecture: KS-AT-DH-KR-PCP-C-A-T-R (By similarity).</text>
</comment>
<comment type="similarity">
    <text evidence="11">In the C-terminal section; belongs to the NRP synthetase family.</text>
</comment>
<evidence type="ECO:0000250" key="1">
    <source>
        <dbReference type="UniProtKB" id="A0A0E4AZP0"/>
    </source>
</evidence>
<evidence type="ECO:0000250" key="2">
    <source>
        <dbReference type="UniProtKB" id="Q4WAZ9"/>
    </source>
</evidence>
<evidence type="ECO:0000255" key="3"/>
<evidence type="ECO:0000255" key="4">
    <source>
        <dbReference type="PROSITE-ProRule" id="PRU00258"/>
    </source>
</evidence>
<evidence type="ECO:0000255" key="5">
    <source>
        <dbReference type="PROSITE-ProRule" id="PRU01348"/>
    </source>
</evidence>
<evidence type="ECO:0000255" key="6">
    <source>
        <dbReference type="PROSITE-ProRule" id="PRU01363"/>
    </source>
</evidence>
<evidence type="ECO:0000256" key="7">
    <source>
        <dbReference type="SAM" id="MobiDB-lite"/>
    </source>
</evidence>
<evidence type="ECO:0000269" key="8">
    <source>
    </source>
</evidence>
<evidence type="ECO:0000269" key="9">
    <source>
    </source>
</evidence>
<evidence type="ECO:0000303" key="10">
    <source>
    </source>
</evidence>
<evidence type="ECO:0000305" key="11"/>
<evidence type="ECO:0000305" key="12">
    <source>
    </source>
</evidence>
<reference key="1">
    <citation type="journal article" date="2015" name="ACS Synth. Biol.">
        <title>Native promoter strategy for high-yielding synthesis and engineering of fungal secondary metabolites.</title>
        <authorList>
            <person name="Kakule T.B."/>
            <person name="Jadulco R.C."/>
            <person name="Koch M."/>
            <person name="Janso J.E."/>
            <person name="Barrows L.R."/>
            <person name="Schmidt E.W."/>
        </authorList>
    </citation>
    <scope>NUCLEOTIDE SEQUENCE [GENOMIC DNA]</scope>
    <scope>FUNCTION</scope>
    <scope>PATHWAY</scope>
</reference>
<reference key="2">
    <citation type="journal article" date="2014" name="J. Nat. Prod.">
        <title>Isolation of pyrrolocins A-C: cis- and trans-decalin tetramic acid antibiotics from an endophytic fungal-derived pathway.</title>
        <authorList>
            <person name="Jadulco R.C."/>
            <person name="Koch M."/>
            <person name="Kakule T.B."/>
            <person name="Schmidt E.W."/>
            <person name="Orendt A."/>
            <person name="He H."/>
            <person name="Janso J.E."/>
            <person name="Carter G.T."/>
            <person name="Larson E.C."/>
            <person name="Pond C."/>
            <person name="Matainaho T.K."/>
            <person name="Barrows L.R."/>
        </authorList>
    </citation>
    <scope>FUNCTION</scope>
</reference>
<dbReference type="EC" id="2.3.1.-" evidence="12"/>
<dbReference type="EC" id="6.3.2.-" evidence="12"/>
<dbReference type="EMBL" id="KM107910">
    <property type="protein sequence ID" value="AIP87510.1"/>
    <property type="molecule type" value="Genomic_DNA"/>
</dbReference>
<dbReference type="SMR" id="A0A089FSA4"/>
<dbReference type="GO" id="GO:0004315">
    <property type="term" value="F:3-oxoacyl-[acyl-carrier-protein] synthase activity"/>
    <property type="evidence" value="ECO:0007669"/>
    <property type="project" value="InterPro"/>
</dbReference>
<dbReference type="GO" id="GO:0004312">
    <property type="term" value="F:fatty acid synthase activity"/>
    <property type="evidence" value="ECO:0007669"/>
    <property type="project" value="TreeGrafter"/>
</dbReference>
<dbReference type="GO" id="GO:0016874">
    <property type="term" value="F:ligase activity"/>
    <property type="evidence" value="ECO:0007669"/>
    <property type="project" value="UniProtKB-KW"/>
</dbReference>
<dbReference type="GO" id="GO:0008168">
    <property type="term" value="F:methyltransferase activity"/>
    <property type="evidence" value="ECO:0007669"/>
    <property type="project" value="UniProtKB-KW"/>
</dbReference>
<dbReference type="GO" id="GO:0016491">
    <property type="term" value="F:oxidoreductase activity"/>
    <property type="evidence" value="ECO:0007669"/>
    <property type="project" value="UniProtKB-KW"/>
</dbReference>
<dbReference type="GO" id="GO:0031177">
    <property type="term" value="F:phosphopantetheine binding"/>
    <property type="evidence" value="ECO:0007669"/>
    <property type="project" value="InterPro"/>
</dbReference>
<dbReference type="GO" id="GO:0006633">
    <property type="term" value="P:fatty acid biosynthetic process"/>
    <property type="evidence" value="ECO:0007669"/>
    <property type="project" value="InterPro"/>
</dbReference>
<dbReference type="GO" id="GO:0032259">
    <property type="term" value="P:methylation"/>
    <property type="evidence" value="ECO:0007669"/>
    <property type="project" value="UniProtKB-KW"/>
</dbReference>
<dbReference type="GO" id="GO:0009403">
    <property type="term" value="P:toxin biosynthetic process"/>
    <property type="evidence" value="ECO:0007669"/>
    <property type="project" value="UniProtKB-ARBA"/>
</dbReference>
<dbReference type="CDD" id="cd05930">
    <property type="entry name" value="A_NRPS"/>
    <property type="match status" value="1"/>
</dbReference>
<dbReference type="CDD" id="cd02440">
    <property type="entry name" value="AdoMet_MTases"/>
    <property type="match status" value="1"/>
</dbReference>
<dbReference type="CDD" id="cd19532">
    <property type="entry name" value="C_PKS-NRPS"/>
    <property type="match status" value="1"/>
</dbReference>
<dbReference type="CDD" id="cd00833">
    <property type="entry name" value="PKS"/>
    <property type="match status" value="1"/>
</dbReference>
<dbReference type="Gene3D" id="3.30.300.30">
    <property type="match status" value="1"/>
</dbReference>
<dbReference type="Gene3D" id="3.40.47.10">
    <property type="match status" value="1"/>
</dbReference>
<dbReference type="Gene3D" id="1.10.1200.10">
    <property type="entry name" value="ACP-like"/>
    <property type="match status" value="2"/>
</dbReference>
<dbReference type="Gene3D" id="3.30.559.10">
    <property type="entry name" value="Chloramphenicol acetyltransferase-like domain"/>
    <property type="match status" value="1"/>
</dbReference>
<dbReference type="Gene3D" id="3.40.366.10">
    <property type="entry name" value="Malonyl-Coenzyme A Acyl Carrier Protein, domain 2"/>
    <property type="match status" value="1"/>
</dbReference>
<dbReference type="Gene3D" id="3.40.50.12780">
    <property type="entry name" value="N-terminal domain of ligase-like"/>
    <property type="match status" value="1"/>
</dbReference>
<dbReference type="Gene3D" id="3.40.50.720">
    <property type="entry name" value="NAD(P)-binding Rossmann-like Domain"/>
    <property type="match status" value="3"/>
</dbReference>
<dbReference type="Gene3D" id="3.30.559.30">
    <property type="entry name" value="Nonribosomal peptide synthetase, condensation domain"/>
    <property type="match status" value="1"/>
</dbReference>
<dbReference type="Gene3D" id="3.10.129.110">
    <property type="entry name" value="Polyketide synthase dehydratase"/>
    <property type="match status" value="1"/>
</dbReference>
<dbReference type="Gene3D" id="3.40.50.150">
    <property type="entry name" value="Vaccinia Virus protein VP39"/>
    <property type="match status" value="1"/>
</dbReference>
<dbReference type="InterPro" id="IPR001227">
    <property type="entry name" value="Ac_transferase_dom_sf"/>
</dbReference>
<dbReference type="InterPro" id="IPR036736">
    <property type="entry name" value="ACP-like_sf"/>
</dbReference>
<dbReference type="InterPro" id="IPR014043">
    <property type="entry name" value="Acyl_transferase_dom"/>
</dbReference>
<dbReference type="InterPro" id="IPR016035">
    <property type="entry name" value="Acyl_Trfase/lysoPLipase"/>
</dbReference>
<dbReference type="InterPro" id="IPR045851">
    <property type="entry name" value="AMP-bd_C_sf"/>
</dbReference>
<dbReference type="InterPro" id="IPR020845">
    <property type="entry name" value="AMP-binding_CS"/>
</dbReference>
<dbReference type="InterPro" id="IPR000873">
    <property type="entry name" value="AMP-dep_synth/lig_dom"/>
</dbReference>
<dbReference type="InterPro" id="IPR042099">
    <property type="entry name" value="ANL_N_sf"/>
</dbReference>
<dbReference type="InterPro" id="IPR023213">
    <property type="entry name" value="CAT-like_dom_sf"/>
</dbReference>
<dbReference type="InterPro" id="IPR001242">
    <property type="entry name" value="Condensatn"/>
</dbReference>
<dbReference type="InterPro" id="IPR013120">
    <property type="entry name" value="Far_NAD-bd"/>
</dbReference>
<dbReference type="InterPro" id="IPR018201">
    <property type="entry name" value="Ketoacyl_synth_AS"/>
</dbReference>
<dbReference type="InterPro" id="IPR014031">
    <property type="entry name" value="Ketoacyl_synth_C"/>
</dbReference>
<dbReference type="InterPro" id="IPR014030">
    <property type="entry name" value="Ketoacyl_synth_N"/>
</dbReference>
<dbReference type="InterPro" id="IPR016036">
    <property type="entry name" value="Malonyl_transacylase_ACP-bd"/>
</dbReference>
<dbReference type="InterPro" id="IPR013217">
    <property type="entry name" value="Methyltransf_12"/>
</dbReference>
<dbReference type="InterPro" id="IPR036291">
    <property type="entry name" value="NAD(P)-bd_dom_sf"/>
</dbReference>
<dbReference type="InterPro" id="IPR020841">
    <property type="entry name" value="PKS_Beta-ketoAc_synthase_dom"/>
</dbReference>
<dbReference type="InterPro" id="IPR042104">
    <property type="entry name" value="PKS_dehydratase_sf"/>
</dbReference>
<dbReference type="InterPro" id="IPR020807">
    <property type="entry name" value="PKS_DH"/>
</dbReference>
<dbReference type="InterPro" id="IPR049551">
    <property type="entry name" value="PKS_DH_C"/>
</dbReference>
<dbReference type="InterPro" id="IPR049552">
    <property type="entry name" value="PKS_DH_N"/>
</dbReference>
<dbReference type="InterPro" id="IPR013968">
    <property type="entry name" value="PKS_KR"/>
</dbReference>
<dbReference type="InterPro" id="IPR049900">
    <property type="entry name" value="PKS_mFAS_DH"/>
</dbReference>
<dbReference type="InterPro" id="IPR050091">
    <property type="entry name" value="PKS_NRPS_Biosynth_Enz"/>
</dbReference>
<dbReference type="InterPro" id="IPR020806">
    <property type="entry name" value="PKS_PP-bd"/>
</dbReference>
<dbReference type="InterPro" id="IPR009081">
    <property type="entry name" value="PP-bd_ACP"/>
</dbReference>
<dbReference type="InterPro" id="IPR029063">
    <property type="entry name" value="SAM-dependent_MTases_sf"/>
</dbReference>
<dbReference type="InterPro" id="IPR016039">
    <property type="entry name" value="Thiolase-like"/>
</dbReference>
<dbReference type="PANTHER" id="PTHR43775">
    <property type="entry name" value="FATTY ACID SYNTHASE"/>
    <property type="match status" value="1"/>
</dbReference>
<dbReference type="PANTHER" id="PTHR43775:SF20">
    <property type="entry name" value="HYBRID PKS-NRPS SYNTHETASE APDA"/>
    <property type="match status" value="1"/>
</dbReference>
<dbReference type="Pfam" id="PF00698">
    <property type="entry name" value="Acyl_transf_1"/>
    <property type="match status" value="1"/>
</dbReference>
<dbReference type="Pfam" id="PF00501">
    <property type="entry name" value="AMP-binding"/>
    <property type="match status" value="1"/>
</dbReference>
<dbReference type="Pfam" id="PF00668">
    <property type="entry name" value="Condensation"/>
    <property type="match status" value="1"/>
</dbReference>
<dbReference type="Pfam" id="PF22621">
    <property type="entry name" value="CurL-like_PKS_C"/>
    <property type="match status" value="1"/>
</dbReference>
<dbReference type="Pfam" id="PF00109">
    <property type="entry name" value="ketoacyl-synt"/>
    <property type="match status" value="1"/>
</dbReference>
<dbReference type="Pfam" id="PF02801">
    <property type="entry name" value="Ketoacyl-synt_C"/>
    <property type="match status" value="1"/>
</dbReference>
<dbReference type="Pfam" id="PF08659">
    <property type="entry name" value="KR"/>
    <property type="match status" value="1"/>
</dbReference>
<dbReference type="Pfam" id="PF08242">
    <property type="entry name" value="Methyltransf_12"/>
    <property type="match status" value="1"/>
</dbReference>
<dbReference type="Pfam" id="PF07993">
    <property type="entry name" value="NAD_binding_4"/>
    <property type="match status" value="1"/>
</dbReference>
<dbReference type="Pfam" id="PF21089">
    <property type="entry name" value="PKS_DH_N"/>
    <property type="match status" value="1"/>
</dbReference>
<dbReference type="Pfam" id="PF00550">
    <property type="entry name" value="PP-binding"/>
    <property type="match status" value="2"/>
</dbReference>
<dbReference type="Pfam" id="PF14765">
    <property type="entry name" value="PS-DH"/>
    <property type="match status" value="1"/>
</dbReference>
<dbReference type="SMART" id="SM00827">
    <property type="entry name" value="PKS_AT"/>
    <property type="match status" value="1"/>
</dbReference>
<dbReference type="SMART" id="SM00826">
    <property type="entry name" value="PKS_DH"/>
    <property type="match status" value="1"/>
</dbReference>
<dbReference type="SMART" id="SM00822">
    <property type="entry name" value="PKS_KR"/>
    <property type="match status" value="1"/>
</dbReference>
<dbReference type="SMART" id="SM00825">
    <property type="entry name" value="PKS_KS"/>
    <property type="match status" value="1"/>
</dbReference>
<dbReference type="SMART" id="SM00823">
    <property type="entry name" value="PKS_PP"/>
    <property type="match status" value="2"/>
</dbReference>
<dbReference type="SUPFAM" id="SSF56801">
    <property type="entry name" value="Acetyl-CoA synthetase-like"/>
    <property type="match status" value="1"/>
</dbReference>
<dbReference type="SUPFAM" id="SSF47336">
    <property type="entry name" value="ACP-like"/>
    <property type="match status" value="2"/>
</dbReference>
<dbReference type="SUPFAM" id="SSF52777">
    <property type="entry name" value="CoA-dependent acyltransferases"/>
    <property type="match status" value="2"/>
</dbReference>
<dbReference type="SUPFAM" id="SSF52151">
    <property type="entry name" value="FabD/lysophospholipase-like"/>
    <property type="match status" value="1"/>
</dbReference>
<dbReference type="SUPFAM" id="SSF51735">
    <property type="entry name" value="NAD(P)-binding Rossmann-fold domains"/>
    <property type="match status" value="3"/>
</dbReference>
<dbReference type="SUPFAM" id="SSF55048">
    <property type="entry name" value="Probable ACP-binding domain of malonyl-CoA ACP transacylase"/>
    <property type="match status" value="1"/>
</dbReference>
<dbReference type="SUPFAM" id="SSF53335">
    <property type="entry name" value="S-adenosyl-L-methionine-dependent methyltransferases"/>
    <property type="match status" value="1"/>
</dbReference>
<dbReference type="SUPFAM" id="SSF53901">
    <property type="entry name" value="Thiolase-like"/>
    <property type="match status" value="1"/>
</dbReference>
<dbReference type="PROSITE" id="PS00455">
    <property type="entry name" value="AMP_BINDING"/>
    <property type="match status" value="1"/>
</dbReference>
<dbReference type="PROSITE" id="PS50075">
    <property type="entry name" value="CARRIER"/>
    <property type="match status" value="2"/>
</dbReference>
<dbReference type="PROSITE" id="PS00606">
    <property type="entry name" value="KS3_1"/>
    <property type="match status" value="1"/>
</dbReference>
<dbReference type="PROSITE" id="PS52004">
    <property type="entry name" value="KS3_2"/>
    <property type="match status" value="1"/>
</dbReference>
<dbReference type="PROSITE" id="PS52019">
    <property type="entry name" value="PKS_MFAS_DH"/>
    <property type="match status" value="1"/>
</dbReference>
<protein>
    <recommendedName>
        <fullName evidence="10">Hybrid PKS-NRPS synthetase prlS</fullName>
        <ecNumber evidence="12">2.3.1.-</ecNumber>
        <ecNumber evidence="12">6.3.2.-</ecNumber>
    </recommendedName>
    <alternativeName>
        <fullName evidence="10">Pyrrolocin biosynthesis protein S</fullName>
    </alternativeName>
</protein>
<feature type="chain" id="PRO_0000441291" description="Hybrid PKS-NRPS synthetase prlS">
    <location>
        <begin position="1"/>
        <end position="4037"/>
    </location>
</feature>
<feature type="domain" description="Ketosynthase family 3 (KS3)" evidence="5 12">
    <location>
        <begin position="4"/>
        <end position="436"/>
    </location>
</feature>
<feature type="domain" description="PKS/mFAS DH" evidence="6">
    <location>
        <begin position="950"/>
        <end position="1253"/>
    </location>
</feature>
<feature type="domain" description="Carrier 1" evidence="4">
    <location>
        <begin position="2447"/>
        <end position="2522"/>
    </location>
</feature>
<feature type="domain" description="Carrier 2" evidence="4">
    <location>
        <begin position="3610"/>
        <end position="3687"/>
    </location>
</feature>
<feature type="region of interest" description="Malonyl-CoA:ACP transacylase (MAT) domain" evidence="3 12">
    <location>
        <begin position="557"/>
        <end position="879"/>
    </location>
</feature>
<feature type="region of interest" description="Dehydratase (DH) domain" evidence="3 12">
    <location>
        <begin position="950"/>
        <end position="1251"/>
    </location>
</feature>
<feature type="region of interest" description="N-terminal hotdog fold" evidence="6">
    <location>
        <begin position="950"/>
        <end position="1085"/>
    </location>
</feature>
<feature type="region of interest" description="C-terminal hotdog fold" evidence="6">
    <location>
        <begin position="1100"/>
        <end position="1253"/>
    </location>
</feature>
<feature type="region of interest" description="Methyltransferase (MT) domain" evidence="3 12">
    <location>
        <begin position="1448"/>
        <end position="1610"/>
    </location>
</feature>
<feature type="region of interest" description="Ketoreductase (KR) domain" evidence="3 12">
    <location>
        <begin position="2144"/>
        <end position="2315"/>
    </location>
</feature>
<feature type="region of interest" description="Disordered" evidence="7">
    <location>
        <begin position="2535"/>
        <end position="2594"/>
    </location>
</feature>
<feature type="region of interest" description="Condensation (C) domain" evidence="3 12">
    <location>
        <begin position="2614"/>
        <end position="3046"/>
    </location>
</feature>
<feature type="region of interest" description="Adenylation (A) (KR) domain" evidence="3 12">
    <location>
        <begin position="3094"/>
        <end position="3495"/>
    </location>
</feature>
<feature type="region of interest" description="Reductase (RED) domain" evidence="3 12">
    <location>
        <begin position="3724"/>
        <end position="3961"/>
    </location>
</feature>
<feature type="region of interest" description="Disordered" evidence="7">
    <location>
        <begin position="3894"/>
        <end position="3915"/>
    </location>
</feature>
<feature type="compositionally biased region" description="Low complexity" evidence="7">
    <location>
        <begin position="2553"/>
        <end position="2584"/>
    </location>
</feature>
<feature type="compositionally biased region" description="Basic and acidic residues" evidence="7">
    <location>
        <begin position="3904"/>
        <end position="3915"/>
    </location>
</feature>
<feature type="active site" description="For beta-ketoacyl synthase activity" evidence="5">
    <location>
        <position position="178"/>
    </location>
</feature>
<feature type="active site" description="For beta-ketoacyl synthase activity" evidence="5">
    <location>
        <position position="317"/>
    </location>
</feature>
<feature type="active site" description="For beta-ketoacyl synthase activity" evidence="5">
    <location>
        <position position="356"/>
    </location>
</feature>
<feature type="active site" description="Proton acceptor; for dehydratase activity" evidence="6">
    <location>
        <position position="983"/>
    </location>
</feature>
<feature type="active site" description="Proton donor; for dehydratase activity" evidence="6">
    <location>
        <position position="1160"/>
    </location>
</feature>
<feature type="modified residue" description="O-(pantetheine 4'-phosphoryl)serine" evidence="4">
    <location>
        <position position="2482"/>
    </location>
</feature>
<feature type="modified residue" description="O-(pantetheine 4'-phosphoryl)serine" evidence="4">
    <location>
        <position position="3647"/>
    </location>
</feature>
<sequence length="4037" mass="442186">MSSTEPIAVIGSACRFPGSSDRPSKLWELLREPRDLLQKVSERRRWHPDAFYHSDPEHHGTTNVRSSYFLDEDPADFDNAFFNIQPSEAEAIDPQQRMLMETVYDSLCSAGQTIEGLRGSSTAVIVGTMCDDWSGVLYKDWETIPQYSATGMGRSIMSNRVSYFFDWHGPSMTLDTACSSSLVAVHLAIQALRTGESRVAVAAGANLLLGPGMYIAEANLHMLSPKGRSAMWDKDVDGYARGEGIASVILKPLSAAIEDGDHIECLIRATGVNQDGRTQGLTMPSATAQAALIRETYARAGLDIDKPEDRPQFFHAHGTGTPAGDPQEAEAISKAFYSQDASDSLYVGSIKTVIGHTEGTAGLASLLGTSLALQHGMVPPNMHFNELNPRIAPFYGNLQVPTTAKPWPKLLPGQPRRASVNSFVFVIYLDSWLTWPPNAGFGGTNAHAILEAYEPPSVSPSAGPLFSPLTISAATEKSLRALMSSYSEYLKANPKTSLRDFAYTLQERRSTLAFRAAIAASTSDEAAIKIDGLLDAEDARELSTKHFGIPSPRLLGVFTGQGAQWPRMGARLVEASPFVATRLDELDASLASLPESIRPEWTLKEQMLEDAATSRVAEAAVSQPLCTAVQILLVDLLSVAGVRFHAVVGHSSGEIGAAYAAGLLSASSAIRIAYLRGLYAKLANSPNGNIRGAMMAAGTSFEDASEFCQLEGFEGRIQVAAVNSASSITLSGDEDAIAEAVEIFKDEGKFARQLKVDTAYHSAHMLPCSKPYLKSLEAMTDVLGADASGEGKPAWYSSVHEGEIMKPAALNPQYWVSNMTNTVLFAPAVAAAVAQSGPFDMALELGPHPALKGPCLDTLAEALGDRIPYSGLLSRGQDDISEMSAALGSVWSNLGAGSVSFETFEKSISGDLKGRNLIADLPKYEFDHSRSFWTISRAVGAQLVAHDPPHPVLGRRCVDRETSREIQWRNILSPKEVPWLKGHRIQGGIVYPAAGFVAMAVEAMRALAGKSSINLIKIDNLFIGRAIAFNEETSTVETLFSVKVVSSSDESIQASFSCYSGAPHEPGTSMGLNAEGIVTVTLADHEADVILFVEPKDFNMTEIETDRFYDQFQRLEYEYSPPFRGMLAIKRKKGHARGTIEDQSGSDWEDQFLIHPGMLDTAFQSSSAAFSCPGDGMMWGLYIPAGIQSIVINPYFTPAGMGKQQTLPWEAIARSMHKARSTMDINIFSQDSTHTFIQVEGLELMPFTAARPEDDAVIFSRFDYKIDGPSGDIAVADDGFTAEALENAIKGERVSFYYLRRLVESITPEEKANAPRYYRHLLDWASHVVDRVKSGKNPFVQSSWQLDTEEQIKAIWDKYGDRVDVRLIESVGKHLPDVIRKGTSILEHMEGLFEFYDQGLGLDMANRHLARMVAQVGHRYPQMRVFEIGEPRKPAPMLLCCHSDSRVLGAGTGGSTRTILSYLGDMFSSYTYTDISSGFFEAAQDRFKDFESRMVYKTFDMERDPESQGFVEGSYDLVLASNCLHATDKLEEMMTNARRLLRPGGYLIALELTSNETMRVGLPMGSLPGWWVGAESGRPWGPTVTLPQWDSLLRKCGFGGIDTSTPLLHKLHVSTVFAAQAVDDRVSLLRSPLASITVLPPTDAPRLVVVGGEALATHRIAERVASLLGPRFSDIARVTSFESLDIDALPYGSTVLSLSELDEPLFKNMNPAKLDALKTLWRQAGKILWVTRGARAEEPFSSMMLGLGRAMTHEYPNISLQILDLDRLEDEEKTAQLFTAELLRLEVLKKWQHEAQGEVDFLWSIEPEVCFEGGARLIPRLYKCRPANDRYNSARRPVMTEIDPRETPILFASEGASYELQHPSPLRIPSAPPAVSKTRTVNVSHFLLQTVHMSSAGRFMLFAGADRYTGERLLGLSHTTESQPTVPTEWTFPIASEGTNPAEALSSVYGQIIAREILKMVPKGSSIVVHEPDPSLGAALLQQAEACATEVVLTTSRKGSVSSEGRFIPANLSRRLVKKALPDSTSLYVDLSHAGESSEAGKLIGKCLPGSCSTYGSGYFHGTTPELRPGSSSSQLSAIFKAACEAAFEGQCQTAIPDIVQLQDVPSLRAIGRPLTVVDCVSTATVPVNVQTVDSGMIFRADKTYFLVGMSGQVGQSLCQWMVERGARYVVLTSRHPQVHPEYVKSMEAMGATIRVLPLDITSRDSLQQCYAEMCKTMPPVAGVAQGAMVLRDSMFDGLSFENLTAVLDPKVTGTQLLDELFYDAPLDFFIVMSSLTSVVGNSGQSNYTAANMFMVALAEQRRKRGVAGSAIAISSLIGIGYVERSEDFTGDYFEKIGYRNISEQDLHQLFAEAILVGRPGCRESSEITTGLEPFYPERNAKAQFFDDIRFNHFILERHDAQNLGGKGSAVPVRVQLAEVKTRDEAAVIIKGEANSRKNDFETQKADSRTDGFLARLRRTLMISQDEAVNEKASLVEQGIDSLMAVEVRSWFLKELEVDIPVLKILGGSSITDLLNEALERVPVSVVDLKAMANTKASTPEHRKVSVPPPPSVEVKSSSPGSSSEPQSSPADSPSRPSTPLRTPMTEMEESKTLAPVVVEKPKVYPAAKEEASEMSYGQARFWFLSGYLEDKTSFNMTVMFKLTGKLQVARLESAVRTVAQRHEALRTRFFWSGEGDRRTPMQGVLSESPIQLEHVRIESEADAQKQLAKMHEYVWDLNSWEAARMVLLTVDDDVHYFMVSGHHISWDGYSFTVLFVDLDAAYCGRPLAPLGPECQYPAFAAWQRDTYAAGAMKKAIDTYYRPMIDPHAKAIPLFPFAKSPTRPLLDHFEQFEAKATLQPALVSKLKQLSRKNGATMFHLYLAALQALVFRLLPEEDDFYLGVADANRMDKSFMGSLGFFLNLLPVRFDRSQPGTKISEIIKDTRNKAYKALENSFVPWNVLLQELKIPRTNTEAPIFQLFVDYRQIARDRAQWCGCALSDEDWLNARNGYDLTLGITDNPTGESLLSLRFQKKLYSEHSTNLFLRSYVTVLESFATGVDLEVSELPRWAPSDVEATLEAGKVYRKLMTNPQGPCTQLDWPATVSHRIDEMIHEHTAQPALKDGLGNSLTYGQMRDRINMISAALIAGGAIEGSSIGVFQNPSADWICSMLAIFRIGATYVPLDLRNSIARIVSIVADVQPTVILSDRYTTTKIRQIGAVQATEIVVSDIATSVSAPDLPNKAAPDSRAVILFTSGTTGKPKGVILTHANLRAQCEGYSRMVDLPSMVSVVLQQTIYNFDVSLDQIFAALADGGCLYVVPAEKRGDPQAITEIMAEQGVTYTVATPSEYEIWFRYARDNLARCKSWGYAFGGGEHLHSGLIHEFSSLAAQHIPGLRLFNNYGPTEASLAITKGEVQHSDPGLEDHVPAGWIIPNYKVAVVDEKLQPVPFETSGEILAGGPGVASGYLGQDELTREKFIAGVRIHPLAAKSANTWYRTGDRGRLRRDGALYVDGRILGDSQVKIRGFRVELQEIEAVLLEAAKGALSHAVITARGTGEDRFLAAHVVFAPDFPQHRRQATIHHLESKLPLPPYMQPTVIVPLASIPVTSNFKLDRKAIQALPLPETDGLGENLADVEKSVAMLWKSIIPHGVRDLTPETNFFDVGGNSILLVKLKAAMSRELKVTPLLIDLMNSSTLGGMARIVRASSGARVINWEAETSVPESLRALVKQKKTLSRSKRKNENLVVVLAGATGYLGRHILARLVNAPEVSEINCLVRDEGLEAATSSLQNSPKVRLIPADLSQPDIGLSLAKFSDLSQRADIVVDCAANRSFWDGYETLRTVNLDAVKELARLCVTNGASLHFVSSGAVQAYENSAPPTDGSDGYVASKWAAETFLRRAAESLGLQVHIHRPLGSADVGAPDSTPDRKNPSTKDEIQRDLDHILLKLGKRPDFSAVTGYVDVTPVNSVVSDMVAAMIQEISSGHGGAMLRVTEHRGRLRLHIKEFGDHIGASSQLSALPTMNPLFWFADAKKAGFAQLITSQRLVMHNKEGELVTRR</sequence>
<proteinExistence type="inferred from homology"/>
<gene>
    <name evidence="10" type="primary">prlS</name>
</gene>
<accession>A0A089FSA4</accession>